<comment type="similarity">
    <text evidence="2">Belongs to the sulfur carrier protein TusA family.</text>
</comment>
<feature type="chain" id="PRO_0000159067" description="Putative sulfur carrier protein YedF">
    <location>
        <begin position="1"/>
        <end position="77"/>
    </location>
</feature>
<feature type="active site" description="Cysteine persulfide intermediate" evidence="1">
    <location>
        <position position="17"/>
    </location>
</feature>
<proteinExistence type="inferred from homology"/>
<keyword id="KW-1185">Reference proteome</keyword>
<sequence>MKNIVPDYRLDMVGEPCPYPAVATLEAMPQLKKGEILEVVSDCPQSINNIPLDARNHGYTVLDIQQDGPTIRYLIQK</sequence>
<accession>P0AA36</accession>
<accession>P31065</accession>
<reference key="1">
    <citation type="journal article" date="2002" name="Nucleic Acids Res.">
        <title>Genome sequence of Shigella flexneri 2a: insights into pathogenicity through comparison with genomes of Escherichia coli K12 and O157.</title>
        <authorList>
            <person name="Jin Q."/>
            <person name="Yuan Z."/>
            <person name="Xu J."/>
            <person name="Wang Y."/>
            <person name="Shen Y."/>
            <person name="Lu W."/>
            <person name="Wang J."/>
            <person name="Liu H."/>
            <person name="Yang J."/>
            <person name="Yang F."/>
            <person name="Zhang X."/>
            <person name="Zhang J."/>
            <person name="Yang G."/>
            <person name="Wu H."/>
            <person name="Qu D."/>
            <person name="Dong J."/>
            <person name="Sun L."/>
            <person name="Xue Y."/>
            <person name="Zhao A."/>
            <person name="Gao Y."/>
            <person name="Zhu J."/>
            <person name="Kan B."/>
            <person name="Ding K."/>
            <person name="Chen S."/>
            <person name="Cheng H."/>
            <person name="Yao Z."/>
            <person name="He B."/>
            <person name="Chen R."/>
            <person name="Ma D."/>
            <person name="Qiang B."/>
            <person name="Wen Y."/>
            <person name="Hou Y."/>
            <person name="Yu J."/>
        </authorList>
    </citation>
    <scope>NUCLEOTIDE SEQUENCE [LARGE SCALE GENOMIC DNA]</scope>
    <source>
        <strain>301 / Serotype 2a</strain>
    </source>
</reference>
<reference key="2">
    <citation type="journal article" date="2003" name="Infect. Immun.">
        <title>Complete genome sequence and comparative genomics of Shigella flexneri serotype 2a strain 2457T.</title>
        <authorList>
            <person name="Wei J."/>
            <person name="Goldberg M.B."/>
            <person name="Burland V."/>
            <person name="Venkatesan M.M."/>
            <person name="Deng W."/>
            <person name="Fournier G."/>
            <person name="Mayhew G.F."/>
            <person name="Plunkett G. III"/>
            <person name="Rose D.J."/>
            <person name="Darling A."/>
            <person name="Mau B."/>
            <person name="Perna N.T."/>
            <person name="Payne S.M."/>
            <person name="Runyen-Janecky L.J."/>
            <person name="Zhou S."/>
            <person name="Schwartz D.C."/>
            <person name="Blattner F.R."/>
        </authorList>
    </citation>
    <scope>NUCLEOTIDE SEQUENCE [LARGE SCALE GENOMIC DNA]</scope>
    <source>
        <strain>ATCC 700930 / 2457T / Serotype 2a</strain>
    </source>
</reference>
<dbReference type="EMBL" id="AE005674">
    <property type="protein sequence ID" value="AAN43523.1"/>
    <property type="molecule type" value="Genomic_DNA"/>
</dbReference>
<dbReference type="EMBL" id="AE014073">
    <property type="protein sequence ID" value="AAP17352.1"/>
    <property type="molecule type" value="Genomic_DNA"/>
</dbReference>
<dbReference type="RefSeq" id="NP_707816.1">
    <property type="nucleotide sequence ID" value="NC_004337.2"/>
</dbReference>
<dbReference type="RefSeq" id="WP_000790504.1">
    <property type="nucleotide sequence ID" value="NZ_WPGW01000033.1"/>
</dbReference>
<dbReference type="SMR" id="P0AA36"/>
<dbReference type="STRING" id="198214.SF1973"/>
<dbReference type="PaxDb" id="198214-SF1973"/>
<dbReference type="GeneID" id="1025168"/>
<dbReference type="GeneID" id="93775259"/>
<dbReference type="KEGG" id="sfl:SF1973"/>
<dbReference type="KEGG" id="sfx:S2069"/>
<dbReference type="PATRIC" id="fig|198214.7.peg.2354"/>
<dbReference type="HOGENOM" id="CLU_165255_0_0_6"/>
<dbReference type="Proteomes" id="UP000001006">
    <property type="component" value="Chromosome"/>
</dbReference>
<dbReference type="Proteomes" id="UP000002673">
    <property type="component" value="Chromosome"/>
</dbReference>
<dbReference type="CDD" id="cd03422">
    <property type="entry name" value="YedF"/>
    <property type="match status" value="1"/>
</dbReference>
<dbReference type="FunFam" id="3.30.110.40:FF:000001">
    <property type="entry name" value="SirA-like family protein"/>
    <property type="match status" value="1"/>
</dbReference>
<dbReference type="Gene3D" id="3.30.110.40">
    <property type="entry name" value="TusA-like domain"/>
    <property type="match status" value="1"/>
</dbReference>
<dbReference type="InterPro" id="IPR001455">
    <property type="entry name" value="TusA-like"/>
</dbReference>
<dbReference type="InterPro" id="IPR036868">
    <property type="entry name" value="TusA-like_sf"/>
</dbReference>
<dbReference type="InterPro" id="IPR049570">
    <property type="entry name" value="YedF"/>
</dbReference>
<dbReference type="NCBIfam" id="NF008242">
    <property type="entry name" value="PRK11018.1"/>
    <property type="match status" value="1"/>
</dbReference>
<dbReference type="PANTHER" id="PTHR33279">
    <property type="entry name" value="SULFUR CARRIER PROTEIN YEDF-RELATED"/>
    <property type="match status" value="1"/>
</dbReference>
<dbReference type="PANTHER" id="PTHR33279:SF6">
    <property type="entry name" value="SULFUR CARRIER PROTEIN YEDF-RELATED"/>
    <property type="match status" value="1"/>
</dbReference>
<dbReference type="Pfam" id="PF01206">
    <property type="entry name" value="TusA"/>
    <property type="match status" value="1"/>
</dbReference>
<dbReference type="SUPFAM" id="SSF64307">
    <property type="entry name" value="SirA-like"/>
    <property type="match status" value="1"/>
</dbReference>
<dbReference type="PROSITE" id="PS01148">
    <property type="entry name" value="UPF0033"/>
    <property type="match status" value="1"/>
</dbReference>
<name>YEDF_SHIFL</name>
<evidence type="ECO:0000250" key="1">
    <source>
        <dbReference type="UniProtKB" id="P0A890"/>
    </source>
</evidence>
<evidence type="ECO:0000305" key="2"/>
<organism>
    <name type="scientific">Shigella flexneri</name>
    <dbReference type="NCBI Taxonomy" id="623"/>
    <lineage>
        <taxon>Bacteria</taxon>
        <taxon>Pseudomonadati</taxon>
        <taxon>Pseudomonadota</taxon>
        <taxon>Gammaproteobacteria</taxon>
        <taxon>Enterobacterales</taxon>
        <taxon>Enterobacteriaceae</taxon>
        <taxon>Shigella</taxon>
    </lineage>
</organism>
<protein>
    <recommendedName>
        <fullName>Putative sulfur carrier protein YedF</fullName>
    </recommendedName>
</protein>
<gene>
    <name type="primary">yedF</name>
    <name type="ordered locus">SF1973</name>
    <name type="ordered locus">S2069</name>
</gene>